<dbReference type="EMBL" id="AE015925">
    <property type="protein sequence ID" value="AAP04872.1"/>
    <property type="molecule type" value="Genomic_DNA"/>
</dbReference>
<dbReference type="RefSeq" id="WP_011006093.1">
    <property type="nucleotide sequence ID" value="NC_003361.3"/>
</dbReference>
<dbReference type="SMR" id="Q824M5"/>
<dbReference type="STRING" id="227941.CCA_00120"/>
<dbReference type="KEGG" id="cca:CCA_00120"/>
<dbReference type="eggNOG" id="COG0632">
    <property type="taxonomic scope" value="Bacteria"/>
</dbReference>
<dbReference type="HOGENOM" id="CLU_087936_0_0_0"/>
<dbReference type="OrthoDB" id="5293449at2"/>
<dbReference type="Proteomes" id="UP000002193">
    <property type="component" value="Chromosome"/>
</dbReference>
<dbReference type="GO" id="GO:0005737">
    <property type="term" value="C:cytoplasm"/>
    <property type="evidence" value="ECO:0007669"/>
    <property type="project" value="UniProtKB-SubCell"/>
</dbReference>
<dbReference type="GO" id="GO:0009379">
    <property type="term" value="C:Holliday junction helicase complex"/>
    <property type="evidence" value="ECO:0007669"/>
    <property type="project" value="InterPro"/>
</dbReference>
<dbReference type="GO" id="GO:0048476">
    <property type="term" value="C:Holliday junction resolvase complex"/>
    <property type="evidence" value="ECO:0007669"/>
    <property type="project" value="UniProtKB-UniRule"/>
</dbReference>
<dbReference type="GO" id="GO:0005524">
    <property type="term" value="F:ATP binding"/>
    <property type="evidence" value="ECO:0007669"/>
    <property type="project" value="InterPro"/>
</dbReference>
<dbReference type="GO" id="GO:0000400">
    <property type="term" value="F:four-way junction DNA binding"/>
    <property type="evidence" value="ECO:0007669"/>
    <property type="project" value="UniProtKB-UniRule"/>
</dbReference>
<dbReference type="GO" id="GO:0009378">
    <property type="term" value="F:four-way junction helicase activity"/>
    <property type="evidence" value="ECO:0007669"/>
    <property type="project" value="InterPro"/>
</dbReference>
<dbReference type="GO" id="GO:0006310">
    <property type="term" value="P:DNA recombination"/>
    <property type="evidence" value="ECO:0007669"/>
    <property type="project" value="UniProtKB-UniRule"/>
</dbReference>
<dbReference type="GO" id="GO:0006281">
    <property type="term" value="P:DNA repair"/>
    <property type="evidence" value="ECO:0007669"/>
    <property type="project" value="UniProtKB-UniRule"/>
</dbReference>
<dbReference type="CDD" id="cd14332">
    <property type="entry name" value="UBA_RuvA_C"/>
    <property type="match status" value="1"/>
</dbReference>
<dbReference type="Gene3D" id="1.10.150.20">
    <property type="entry name" value="5' to 3' exonuclease, C-terminal subdomain"/>
    <property type="match status" value="1"/>
</dbReference>
<dbReference type="Gene3D" id="1.10.8.10">
    <property type="entry name" value="DNA helicase RuvA subunit, C-terminal domain"/>
    <property type="match status" value="1"/>
</dbReference>
<dbReference type="Gene3D" id="2.40.50.140">
    <property type="entry name" value="Nucleic acid-binding proteins"/>
    <property type="match status" value="1"/>
</dbReference>
<dbReference type="HAMAP" id="MF_00031">
    <property type="entry name" value="DNA_HJ_migration_RuvA"/>
    <property type="match status" value="1"/>
</dbReference>
<dbReference type="InterPro" id="IPR013849">
    <property type="entry name" value="DNA_helicase_Holl-junc_RuvA_I"/>
</dbReference>
<dbReference type="InterPro" id="IPR003583">
    <property type="entry name" value="Hlx-hairpin-Hlx_DNA-bd_motif"/>
</dbReference>
<dbReference type="InterPro" id="IPR012340">
    <property type="entry name" value="NA-bd_OB-fold"/>
</dbReference>
<dbReference type="InterPro" id="IPR000085">
    <property type="entry name" value="RuvA"/>
</dbReference>
<dbReference type="InterPro" id="IPR010994">
    <property type="entry name" value="RuvA_2-like"/>
</dbReference>
<dbReference type="InterPro" id="IPR011114">
    <property type="entry name" value="RuvA_C"/>
</dbReference>
<dbReference type="InterPro" id="IPR036267">
    <property type="entry name" value="RuvA_C_sf"/>
</dbReference>
<dbReference type="NCBIfam" id="TIGR00084">
    <property type="entry name" value="ruvA"/>
    <property type="match status" value="1"/>
</dbReference>
<dbReference type="Pfam" id="PF14520">
    <property type="entry name" value="HHH_5"/>
    <property type="match status" value="1"/>
</dbReference>
<dbReference type="Pfam" id="PF01330">
    <property type="entry name" value="RuvA_N"/>
    <property type="match status" value="1"/>
</dbReference>
<dbReference type="SMART" id="SM00278">
    <property type="entry name" value="HhH1"/>
    <property type="match status" value="2"/>
</dbReference>
<dbReference type="SUPFAM" id="SSF46929">
    <property type="entry name" value="DNA helicase RuvA subunit, C-terminal domain"/>
    <property type="match status" value="1"/>
</dbReference>
<dbReference type="SUPFAM" id="SSF50249">
    <property type="entry name" value="Nucleic acid-binding proteins"/>
    <property type="match status" value="1"/>
</dbReference>
<dbReference type="SUPFAM" id="SSF47781">
    <property type="entry name" value="RuvA domain 2-like"/>
    <property type="match status" value="1"/>
</dbReference>
<protein>
    <recommendedName>
        <fullName evidence="1">Holliday junction branch migration complex subunit RuvA</fullName>
    </recommendedName>
</protein>
<gene>
    <name evidence="1" type="primary">ruvA</name>
    <name type="ordered locus">CCA_00120</name>
</gene>
<organism>
    <name type="scientific">Chlamydia caviae (strain ATCC VR-813 / DSM 19441 / 03DC25 / GPIC)</name>
    <name type="common">Chlamydophila caviae</name>
    <dbReference type="NCBI Taxonomy" id="227941"/>
    <lineage>
        <taxon>Bacteria</taxon>
        <taxon>Pseudomonadati</taxon>
        <taxon>Chlamydiota</taxon>
        <taxon>Chlamydiia</taxon>
        <taxon>Chlamydiales</taxon>
        <taxon>Chlamydiaceae</taxon>
        <taxon>Chlamydia/Chlamydophila group</taxon>
        <taxon>Chlamydia</taxon>
    </lineage>
</organism>
<feature type="chain" id="PRO_0000094615" description="Holliday junction branch migration complex subunit RuvA">
    <location>
        <begin position="1"/>
        <end position="207"/>
    </location>
</feature>
<feature type="region of interest" description="Domain I" evidence="1">
    <location>
        <begin position="1"/>
        <end position="65"/>
    </location>
</feature>
<feature type="region of interest" description="Domain II" evidence="1">
    <location>
        <begin position="66"/>
        <end position="144"/>
    </location>
</feature>
<feature type="region of interest" description="Flexible linker" evidence="1">
    <location>
        <begin position="145"/>
        <end position="155"/>
    </location>
</feature>
<feature type="region of interest" description="Domain III" evidence="1">
    <location>
        <begin position="155"/>
        <end position="207"/>
    </location>
</feature>
<reference key="1">
    <citation type="journal article" date="2003" name="Nucleic Acids Res.">
        <title>Genome sequence of Chlamydophila caviae (Chlamydia psittaci GPIC): examining the role of niche-specific genes in the evolution of the Chlamydiaceae.</title>
        <authorList>
            <person name="Read T.D."/>
            <person name="Myers G.S.A."/>
            <person name="Brunham R.C."/>
            <person name="Nelson W.C."/>
            <person name="Paulsen I.T."/>
            <person name="Heidelberg J.F."/>
            <person name="Holtzapple E.K."/>
            <person name="Khouri H.M."/>
            <person name="Federova N.B."/>
            <person name="Carty H.A."/>
            <person name="Umayam L.A."/>
            <person name="Haft D.H."/>
            <person name="Peterson J.D."/>
            <person name="Beanan M.J."/>
            <person name="White O."/>
            <person name="Salzberg S.L."/>
            <person name="Hsia R.-C."/>
            <person name="McClarty G."/>
            <person name="Rank R.G."/>
            <person name="Bavoil P.M."/>
            <person name="Fraser C.M."/>
        </authorList>
    </citation>
    <scope>NUCLEOTIDE SEQUENCE [LARGE SCALE GENOMIC DNA]</scope>
    <source>
        <strain>ATCC VR-813 / DSM 19441 / 03DC25 / GPIC</strain>
    </source>
</reference>
<comment type="function">
    <text evidence="1">The RuvA-RuvB-RuvC complex processes Holliday junction (HJ) DNA during genetic recombination and DNA repair, while the RuvA-RuvB complex plays an important role in the rescue of blocked DNA replication forks via replication fork reversal (RFR). RuvA specifically binds to HJ cruciform DNA, conferring on it an open structure. The RuvB hexamer acts as an ATP-dependent pump, pulling dsDNA into and through the RuvAB complex. HJ branch migration allows RuvC to scan DNA until it finds its consensus sequence, where it cleaves and resolves the cruciform DNA.</text>
</comment>
<comment type="subunit">
    <text evidence="1">Homotetramer. Forms an RuvA(8)-RuvB(12)-Holliday junction (HJ) complex. HJ DNA is sandwiched between 2 RuvA tetramers; dsDNA enters through RuvA and exits via RuvB. An RuvB hexamer assembles on each DNA strand where it exits the tetramer. Each RuvB hexamer is contacted by two RuvA subunits (via domain III) on 2 adjacent RuvB subunits; this complex drives branch migration. In the full resolvosome a probable DNA-RuvA(4)-RuvB(12)-RuvC(2) complex forms which resolves the HJ.</text>
</comment>
<comment type="subcellular location">
    <subcellularLocation>
        <location evidence="1">Cytoplasm</location>
    </subcellularLocation>
</comment>
<comment type="domain">
    <text evidence="1">Has three domains with a flexible linker between the domains II and III and assumes an 'L' shape. Domain III is highly mobile and contacts RuvB.</text>
</comment>
<comment type="similarity">
    <text evidence="1">Belongs to the RuvA family.</text>
</comment>
<sequence>MYDYIRGILTYMSSGTLVIECQGLGFNIFAPDRWLIELSGQLHREVVVYTYTVVRETEHVLYGFSSRRERECFRMLISFSGVGPKTGLAILNTFSLSKLCSIARAEDVRAIASVPGIGKKTAEKLMVDLKQKLPDLLPLDSKAIASWESVKPSCMDEGIQALAALGYSKPSAERMIAEAMSELPENASLAEILPIALKKNLQGLNKS</sequence>
<name>RUVA_CHLCV</name>
<keyword id="KW-0963">Cytoplasm</keyword>
<keyword id="KW-0227">DNA damage</keyword>
<keyword id="KW-0233">DNA recombination</keyword>
<keyword id="KW-0234">DNA repair</keyword>
<keyword id="KW-0238">DNA-binding</keyword>
<proteinExistence type="inferred from homology"/>
<accession>Q824M5</accession>
<evidence type="ECO:0000255" key="1">
    <source>
        <dbReference type="HAMAP-Rule" id="MF_00031"/>
    </source>
</evidence>